<feature type="signal peptide" evidence="1">
    <location>
        <begin position="1"/>
        <end position="24"/>
    </location>
</feature>
<feature type="chain" id="PRO_5000101393" description="LPS-assembly protein LptD">
    <location>
        <begin position="25"/>
        <end position="929"/>
    </location>
</feature>
<feature type="region of interest" description="Disordered" evidence="2">
    <location>
        <begin position="26"/>
        <end position="208"/>
    </location>
</feature>
<feature type="compositionally biased region" description="Basic and acidic residues" evidence="2">
    <location>
        <begin position="44"/>
        <end position="74"/>
    </location>
</feature>
<feature type="compositionally biased region" description="Polar residues" evidence="2">
    <location>
        <begin position="154"/>
        <end position="164"/>
    </location>
</feature>
<feature type="compositionally biased region" description="Basic and acidic residues" evidence="2">
    <location>
        <begin position="181"/>
        <end position="208"/>
    </location>
</feature>
<protein>
    <recommendedName>
        <fullName evidence="1">LPS-assembly protein LptD</fullName>
    </recommendedName>
</protein>
<name>LPTD_NITMU</name>
<accession>Q2YBP2</accession>
<proteinExistence type="inferred from homology"/>
<sequence length="929" mass="103017">MKLRFIRSAGWLFLLFCLACNARADLPPLSSKPEQGRATPSGEGDDKPVVIDTERIRGHHEYESGTRSESELRSRSTISTDQIKKPNQKADPAAKDTPSAPQQNYTLSPAIKTDSRTGTSAQESEKAESMVLPGGVERLPGPAAEEGEPRLRTRTQSAPRTLSAQKRGEKPAKTPAPAEADQDRPGFAEGERIGGHREEAGDEKLRLAGETEPEAIEQKLAEAEAETDKQSPVFVVADRLQGHVEEEIEAIGKAELSAGPQFISAERMKYNQGTNDAEAQGNVRVEKEGDILEGSDLKFNLLSKTGQLSEPSYRLKDASSRGYAGMLLFEGENQYRLQKASYTTCPVGDDSWVLQVADLKLDNDKKVGTAKNVKLTFKDVPILYTPWMNFSYSGERKSGLLAPTYGTGSRTGLELAVPFYWNIAPNYDATFSARLMSKRGLAINNEFRFLGQNSSSNLLADIVPRDLDTQTTRWRTSFWHNHYLGAGFSARLDYNRVSDATYFRDFGNNLNLTSRTNLLQQGLLSYNRGLGDDGTFNVTSLVQSFQTIQDPLAAIVVPYKRLPQVGLNANKPDVFGTGVDVNLSGSWTNFSHPTLVNGSRTVLFPSMSYPLRNSFGFITPKVGMHYTRYSLGEGAGVSEENPTRTLPIFSLDSGLAFDRKMSLGGESFTQTLEPRVFYVYVPFRAQDQLPNFDSAKTDFSFAQMLAENRFSGSDRINDANQVTFALTTRLLESSTGRERLRLAVGHQLSFIDRRITLETPQTIDRRPDFIAAVSGFLTPTISTDTSFQFDQTRLLADVVRSGVSYRPEPGRVLNFGYRFTRDVLHQVDASSQWRWSERWQTVARLNYSLQDKRILEGLAGVEYNACCWSLRFVLQHLTLATQKSTTAAFLQLELNGLMQIGSNPLTVLQRSIPGYIRTGSQGSGLIEGP</sequence>
<comment type="function">
    <text evidence="1">Together with LptE, is involved in the assembly of lipopolysaccharide (LPS) at the surface of the outer membrane.</text>
</comment>
<comment type="subunit">
    <text evidence="1">Component of the lipopolysaccharide transport and assembly complex. Interacts with LptE and LptA.</text>
</comment>
<comment type="subcellular location">
    <subcellularLocation>
        <location evidence="1">Cell outer membrane</location>
    </subcellularLocation>
</comment>
<comment type="similarity">
    <text evidence="1">Belongs to the LptD family.</text>
</comment>
<evidence type="ECO:0000255" key="1">
    <source>
        <dbReference type="HAMAP-Rule" id="MF_01411"/>
    </source>
</evidence>
<evidence type="ECO:0000256" key="2">
    <source>
        <dbReference type="SAM" id="MobiDB-lite"/>
    </source>
</evidence>
<gene>
    <name evidence="1" type="primary">lptD</name>
    <name type="synonym">imp</name>
    <name type="synonym">ostA</name>
    <name type="ordered locus">Nmul_A0521</name>
</gene>
<organism>
    <name type="scientific">Nitrosospira multiformis (strain ATCC 25196 / NCIMB 11849 / C 71)</name>
    <dbReference type="NCBI Taxonomy" id="323848"/>
    <lineage>
        <taxon>Bacteria</taxon>
        <taxon>Pseudomonadati</taxon>
        <taxon>Pseudomonadota</taxon>
        <taxon>Betaproteobacteria</taxon>
        <taxon>Nitrosomonadales</taxon>
        <taxon>Nitrosomonadaceae</taxon>
        <taxon>Nitrosospira</taxon>
    </lineage>
</organism>
<dbReference type="EMBL" id="CP000103">
    <property type="protein sequence ID" value="ABB73829.1"/>
    <property type="molecule type" value="Genomic_DNA"/>
</dbReference>
<dbReference type="RefSeq" id="WP_011379883.1">
    <property type="nucleotide sequence ID" value="NC_007614.1"/>
</dbReference>
<dbReference type="SMR" id="Q2YBP2"/>
<dbReference type="STRING" id="323848.Nmul_A0521"/>
<dbReference type="KEGG" id="nmu:Nmul_A0521"/>
<dbReference type="eggNOG" id="COG1452">
    <property type="taxonomic scope" value="Bacteria"/>
</dbReference>
<dbReference type="HOGENOM" id="CLU_009039_0_0_4"/>
<dbReference type="OrthoDB" id="9760225at2"/>
<dbReference type="Proteomes" id="UP000002718">
    <property type="component" value="Chromosome"/>
</dbReference>
<dbReference type="GO" id="GO:0009279">
    <property type="term" value="C:cell outer membrane"/>
    <property type="evidence" value="ECO:0007669"/>
    <property type="project" value="UniProtKB-SubCell"/>
</dbReference>
<dbReference type="GO" id="GO:1990351">
    <property type="term" value="C:transporter complex"/>
    <property type="evidence" value="ECO:0007669"/>
    <property type="project" value="TreeGrafter"/>
</dbReference>
<dbReference type="GO" id="GO:0043165">
    <property type="term" value="P:Gram-negative-bacterium-type cell outer membrane assembly"/>
    <property type="evidence" value="ECO:0007669"/>
    <property type="project" value="UniProtKB-UniRule"/>
</dbReference>
<dbReference type="GO" id="GO:0015920">
    <property type="term" value="P:lipopolysaccharide transport"/>
    <property type="evidence" value="ECO:0007669"/>
    <property type="project" value="InterPro"/>
</dbReference>
<dbReference type="Gene3D" id="2.60.450.10">
    <property type="entry name" value="Lipopolysaccharide (LPS) transport protein A like domain"/>
    <property type="match status" value="1"/>
</dbReference>
<dbReference type="HAMAP" id="MF_01411">
    <property type="entry name" value="LPS_assembly_LptD"/>
    <property type="match status" value="1"/>
</dbReference>
<dbReference type="InterPro" id="IPR020889">
    <property type="entry name" value="LipoPS_assembly_LptD"/>
</dbReference>
<dbReference type="InterPro" id="IPR050218">
    <property type="entry name" value="LptD"/>
</dbReference>
<dbReference type="InterPro" id="IPR007543">
    <property type="entry name" value="LptD_C"/>
</dbReference>
<dbReference type="PANTHER" id="PTHR30189">
    <property type="entry name" value="LPS-ASSEMBLY PROTEIN"/>
    <property type="match status" value="1"/>
</dbReference>
<dbReference type="PANTHER" id="PTHR30189:SF1">
    <property type="entry name" value="LPS-ASSEMBLY PROTEIN LPTD"/>
    <property type="match status" value="1"/>
</dbReference>
<dbReference type="Pfam" id="PF04453">
    <property type="entry name" value="LptD"/>
    <property type="match status" value="1"/>
</dbReference>
<keyword id="KW-0998">Cell outer membrane</keyword>
<keyword id="KW-0472">Membrane</keyword>
<keyword id="KW-1185">Reference proteome</keyword>
<keyword id="KW-0732">Signal</keyword>
<reference key="1">
    <citation type="submission" date="2005-08" db="EMBL/GenBank/DDBJ databases">
        <title>Complete sequence of chromosome 1 of Nitrosospira multiformis ATCC 25196.</title>
        <authorList>
            <person name="Copeland A."/>
            <person name="Lucas S."/>
            <person name="Lapidus A."/>
            <person name="Barry K."/>
            <person name="Detter J.C."/>
            <person name="Glavina T."/>
            <person name="Hammon N."/>
            <person name="Israni S."/>
            <person name="Pitluck S."/>
            <person name="Chain P."/>
            <person name="Malfatti S."/>
            <person name="Shin M."/>
            <person name="Vergez L."/>
            <person name="Schmutz J."/>
            <person name="Larimer F."/>
            <person name="Land M."/>
            <person name="Hauser L."/>
            <person name="Kyrpides N."/>
            <person name="Lykidis A."/>
            <person name="Richardson P."/>
        </authorList>
    </citation>
    <scope>NUCLEOTIDE SEQUENCE [LARGE SCALE GENOMIC DNA]</scope>
    <source>
        <strain>ATCC 25196 / NCIMB 11849 / C 71</strain>
    </source>
</reference>